<protein>
    <recommendedName>
        <fullName>Pleckstrin homology-like domain family A member 2</fullName>
    </recommendedName>
    <alternativeName>
        <fullName>Imprinted in placenta and liver protein</fullName>
    </alternativeName>
</protein>
<comment type="function">
    <text evidence="1">Plays a role in regulating placenta growth. May act via its PH domain that competes with other PH domain-containing proteins, thereby preventing their binding to membrane lipids (By similarity).</text>
</comment>
<comment type="subcellular location">
    <subcellularLocation>
        <location evidence="1">Cytoplasm</location>
    </subcellularLocation>
    <subcellularLocation>
        <location evidence="1">Membrane</location>
        <topology evidence="1">Peripheral membrane protein</topology>
    </subcellularLocation>
</comment>
<comment type="domain">
    <text evidence="1">The PH domain binds phosphoinositides with a broad specificity. It may compete with the PH domain of some other proteins, thereby interfering with their binding to phosphatidylinositol 4,5-bisphosphate (PIP2) and phosphatidylinositol 3,4,5-trisphosphate (PIP3) (By similarity).</text>
</comment>
<comment type="similarity">
    <text evidence="4">Belongs to the PHLDA2 family.</text>
</comment>
<keyword id="KW-0963">Cytoplasm</keyword>
<keyword id="KW-0472">Membrane</keyword>
<keyword id="KW-1185">Reference proteome</keyword>
<dbReference type="EMBL" id="BT050012">
    <property type="protein sequence ID" value="ACI69813.1"/>
    <property type="molecule type" value="mRNA"/>
</dbReference>
<dbReference type="RefSeq" id="NP_001134998.1">
    <property type="nucleotide sequence ID" value="NM_001141526.2"/>
</dbReference>
<dbReference type="RefSeq" id="XP_045543127.1">
    <property type="nucleotide sequence ID" value="XM_045687171.1"/>
</dbReference>
<dbReference type="SMR" id="B5XG43"/>
<dbReference type="STRING" id="8030.ENSSSAP00000067955"/>
<dbReference type="PaxDb" id="8030-ENSSSAP00000067955"/>
<dbReference type="Ensembl" id="ENSSSAT00000099957">
    <property type="protein sequence ID" value="ENSSSAP00000067955"/>
    <property type="gene ID" value="ENSSSAG00000060970"/>
</dbReference>
<dbReference type="Ensembl" id="ENSSSAT00000195995">
    <property type="protein sequence ID" value="ENSSSAP00000179984"/>
    <property type="gene ID" value="ENSSSAG00000060970"/>
</dbReference>
<dbReference type="Ensembl" id="ENSSSAT00000246943">
    <property type="protein sequence ID" value="ENSSSAP00000142060"/>
    <property type="gene ID" value="ENSSSAG00000060970"/>
</dbReference>
<dbReference type="Ensembl" id="ENSSSAT00020162096">
    <property type="protein sequence ID" value="ENSSSAP00020124156"/>
    <property type="gene ID" value="ENSSSAG00020069325"/>
</dbReference>
<dbReference type="Ensembl" id="ENSSSAT00020162097">
    <property type="protein sequence ID" value="ENSSSAP00020124157"/>
    <property type="gene ID" value="ENSSSAG00020069325"/>
</dbReference>
<dbReference type="Ensembl" id="ENSSSAT00020162098">
    <property type="protein sequence ID" value="ENSSSAP00020124158"/>
    <property type="gene ID" value="ENSSSAG00020069325"/>
</dbReference>
<dbReference type="Ensembl" id="ENSSSAT00070025144">
    <property type="protein sequence ID" value="ENSSSAP00070024055"/>
    <property type="gene ID" value="ENSSSAG00070015698"/>
</dbReference>
<dbReference type="Ensembl" id="ENSSSAT00075036195">
    <property type="protein sequence ID" value="ENSSSAP00075025397"/>
    <property type="gene ID" value="ENSSSAG00075017494"/>
</dbReference>
<dbReference type="Ensembl" id="ENSSSAT00075036202">
    <property type="protein sequence ID" value="ENSSSAP00075025404"/>
    <property type="gene ID" value="ENSSSAG00075017494"/>
</dbReference>
<dbReference type="GeneID" id="100196497"/>
<dbReference type="KEGG" id="sasa:100196497"/>
<dbReference type="CTD" id="7262"/>
<dbReference type="OMA" id="CWHAEIT"/>
<dbReference type="OrthoDB" id="332529at7898"/>
<dbReference type="Proteomes" id="UP000087266">
    <property type="component" value="Chromosome ssa10"/>
</dbReference>
<dbReference type="GO" id="GO:0005737">
    <property type="term" value="C:cytoplasm"/>
    <property type="evidence" value="ECO:0007669"/>
    <property type="project" value="UniProtKB-SubCell"/>
</dbReference>
<dbReference type="GO" id="GO:0016020">
    <property type="term" value="C:membrane"/>
    <property type="evidence" value="ECO:0007669"/>
    <property type="project" value="UniProtKB-SubCell"/>
</dbReference>
<dbReference type="GO" id="GO:1901981">
    <property type="term" value="F:phosphatidylinositol phosphate binding"/>
    <property type="evidence" value="ECO:0007669"/>
    <property type="project" value="InterPro"/>
</dbReference>
<dbReference type="GO" id="GO:0043065">
    <property type="term" value="P:positive regulation of apoptotic process"/>
    <property type="evidence" value="ECO:0007669"/>
    <property type="project" value="InterPro"/>
</dbReference>
<dbReference type="CDD" id="cd00821">
    <property type="entry name" value="PH"/>
    <property type="match status" value="1"/>
</dbReference>
<dbReference type="Gene3D" id="2.30.29.30">
    <property type="entry name" value="Pleckstrin-homology domain (PH domain)/Phosphotyrosine-binding domain (PTB)"/>
    <property type="match status" value="1"/>
</dbReference>
<dbReference type="InterPro" id="IPR011993">
    <property type="entry name" value="PH-like_dom_sf"/>
</dbReference>
<dbReference type="InterPro" id="IPR001849">
    <property type="entry name" value="PH_domain"/>
</dbReference>
<dbReference type="InterPro" id="IPR042832">
    <property type="entry name" value="PHLA1/2/3"/>
</dbReference>
<dbReference type="PANTHER" id="PTHR15478:SF8">
    <property type="entry name" value="PLECKSTRIN HOMOLOGY-LIKE DOMAIN FAMILY A MEMBER 2"/>
    <property type="match status" value="1"/>
</dbReference>
<dbReference type="PANTHER" id="PTHR15478">
    <property type="entry name" value="PLECKSTRIN HOMOLOGY-LIKE DOMAIN, PQ-RICH PROTEIN"/>
    <property type="match status" value="1"/>
</dbReference>
<dbReference type="Pfam" id="PF00169">
    <property type="entry name" value="PH"/>
    <property type="match status" value="1"/>
</dbReference>
<dbReference type="SMART" id="SM00233">
    <property type="entry name" value="PH"/>
    <property type="match status" value="1"/>
</dbReference>
<dbReference type="SUPFAM" id="SSF50729">
    <property type="entry name" value="PH domain-like"/>
    <property type="match status" value="1"/>
</dbReference>
<dbReference type="PROSITE" id="PS50003">
    <property type="entry name" value="PH_DOMAIN"/>
    <property type="match status" value="1"/>
</dbReference>
<accession>B5XG43</accession>
<evidence type="ECO:0000250" key="1"/>
<evidence type="ECO:0000255" key="2">
    <source>
        <dbReference type="PROSITE-ProRule" id="PRU00145"/>
    </source>
</evidence>
<evidence type="ECO:0000256" key="3">
    <source>
        <dbReference type="SAM" id="MobiDB-lite"/>
    </source>
</evidence>
<evidence type="ECO:0000305" key="4"/>
<organism>
    <name type="scientific">Salmo salar</name>
    <name type="common">Atlantic salmon</name>
    <dbReference type="NCBI Taxonomy" id="8030"/>
    <lineage>
        <taxon>Eukaryota</taxon>
        <taxon>Metazoa</taxon>
        <taxon>Chordata</taxon>
        <taxon>Craniata</taxon>
        <taxon>Vertebrata</taxon>
        <taxon>Euteleostomi</taxon>
        <taxon>Actinopterygii</taxon>
        <taxon>Neopterygii</taxon>
        <taxon>Teleostei</taxon>
        <taxon>Protacanthopterygii</taxon>
        <taxon>Salmoniformes</taxon>
        <taxon>Salmonidae</taxon>
        <taxon>Salmoninae</taxon>
        <taxon>Salmo</taxon>
    </lineage>
</organism>
<gene>
    <name type="primary">phlda2</name>
    <name type="synonym">ipl</name>
</gene>
<name>PHLA2_SALSA</name>
<feature type="chain" id="PRO_0000369388" description="Pleckstrin homology-like domain family A member 2">
    <location>
        <begin position="1"/>
        <end position="138"/>
    </location>
</feature>
<feature type="domain" description="PH" evidence="2">
    <location>
        <begin position="11"/>
        <end position="105"/>
    </location>
</feature>
<feature type="region of interest" description="Disordered" evidence="3">
    <location>
        <begin position="117"/>
        <end position="138"/>
    </location>
</feature>
<sequence length="138" mass="15962">MKMSAEQISEVLKEGELEKRSDNLLQFWKRKTCVLTTDSLNIYADTQKRTKSKELKLQSIKKVDCVERTGKFVYFTIVTTDNKEIDFRCSGDDNCWNAVITMALIDFQNRKAIQDFKTRQDDESGSPGQHESRMARAP</sequence>
<reference key="1">
    <citation type="journal article" date="2010" name="BMC Genomics">
        <title>Salmo salar and Esox lucius full-length cDNA sequences reveal changes in evolutionary pressures on a post-tetraploidization genome.</title>
        <authorList>
            <person name="Leong J.S."/>
            <person name="Jantzen S.G."/>
            <person name="von Schalburg K.R."/>
            <person name="Cooper G.A."/>
            <person name="Messmer A.M."/>
            <person name="Liao N.Y."/>
            <person name="Munro S."/>
            <person name="Moore R."/>
            <person name="Holt R.A."/>
            <person name="Jones S.J."/>
            <person name="Davidson W.S."/>
            <person name="Koop B.F."/>
        </authorList>
    </citation>
    <scope>NUCLEOTIDE SEQUENCE [LARGE SCALE MRNA]</scope>
    <source>
        <tissue>Brain</tissue>
    </source>
</reference>
<proteinExistence type="evidence at transcript level"/>